<dbReference type="EC" id="7.1.1.-" evidence="1"/>
<dbReference type="EMBL" id="BX248583">
    <property type="protein sequence ID" value="CAD83181.1"/>
    <property type="molecule type" value="Genomic_DNA"/>
</dbReference>
<dbReference type="SMR" id="Q7VRV3"/>
<dbReference type="STRING" id="203907.Bfl492"/>
<dbReference type="KEGG" id="bfl:Bfl492"/>
<dbReference type="eggNOG" id="COG0377">
    <property type="taxonomic scope" value="Bacteria"/>
</dbReference>
<dbReference type="HOGENOM" id="CLU_055737_7_3_6"/>
<dbReference type="OrthoDB" id="9786737at2"/>
<dbReference type="Proteomes" id="UP000002192">
    <property type="component" value="Chromosome"/>
</dbReference>
<dbReference type="GO" id="GO:0005886">
    <property type="term" value="C:plasma membrane"/>
    <property type="evidence" value="ECO:0007669"/>
    <property type="project" value="UniProtKB-SubCell"/>
</dbReference>
<dbReference type="GO" id="GO:0045271">
    <property type="term" value="C:respiratory chain complex I"/>
    <property type="evidence" value="ECO:0007669"/>
    <property type="project" value="TreeGrafter"/>
</dbReference>
<dbReference type="GO" id="GO:0051539">
    <property type="term" value="F:4 iron, 4 sulfur cluster binding"/>
    <property type="evidence" value="ECO:0007669"/>
    <property type="project" value="UniProtKB-KW"/>
</dbReference>
<dbReference type="GO" id="GO:0005506">
    <property type="term" value="F:iron ion binding"/>
    <property type="evidence" value="ECO:0007669"/>
    <property type="project" value="UniProtKB-UniRule"/>
</dbReference>
<dbReference type="GO" id="GO:0008137">
    <property type="term" value="F:NADH dehydrogenase (ubiquinone) activity"/>
    <property type="evidence" value="ECO:0007669"/>
    <property type="project" value="InterPro"/>
</dbReference>
<dbReference type="GO" id="GO:0050136">
    <property type="term" value="F:NADH:ubiquinone reductase (non-electrogenic) activity"/>
    <property type="evidence" value="ECO:0007669"/>
    <property type="project" value="UniProtKB-UniRule"/>
</dbReference>
<dbReference type="GO" id="GO:0048038">
    <property type="term" value="F:quinone binding"/>
    <property type="evidence" value="ECO:0007669"/>
    <property type="project" value="UniProtKB-KW"/>
</dbReference>
<dbReference type="GO" id="GO:0009060">
    <property type="term" value="P:aerobic respiration"/>
    <property type="evidence" value="ECO:0007669"/>
    <property type="project" value="TreeGrafter"/>
</dbReference>
<dbReference type="GO" id="GO:0015990">
    <property type="term" value="P:electron transport coupled proton transport"/>
    <property type="evidence" value="ECO:0007669"/>
    <property type="project" value="TreeGrafter"/>
</dbReference>
<dbReference type="FunFam" id="3.40.50.12280:FF:000002">
    <property type="entry name" value="NADH-quinone oxidoreductase subunit B"/>
    <property type="match status" value="1"/>
</dbReference>
<dbReference type="Gene3D" id="3.40.50.12280">
    <property type="match status" value="1"/>
</dbReference>
<dbReference type="HAMAP" id="MF_01356">
    <property type="entry name" value="NDH1_NuoB"/>
    <property type="match status" value="1"/>
</dbReference>
<dbReference type="InterPro" id="IPR006137">
    <property type="entry name" value="NADH_UbQ_OxRdtase-like_20kDa"/>
</dbReference>
<dbReference type="InterPro" id="IPR006138">
    <property type="entry name" value="NADH_UQ_OxRdtase_20Kd_su"/>
</dbReference>
<dbReference type="NCBIfam" id="TIGR01957">
    <property type="entry name" value="nuoB_fam"/>
    <property type="match status" value="1"/>
</dbReference>
<dbReference type="NCBIfam" id="NF005012">
    <property type="entry name" value="PRK06411.1"/>
    <property type="match status" value="1"/>
</dbReference>
<dbReference type="PANTHER" id="PTHR11995">
    <property type="entry name" value="NADH DEHYDROGENASE"/>
    <property type="match status" value="1"/>
</dbReference>
<dbReference type="PANTHER" id="PTHR11995:SF14">
    <property type="entry name" value="NADH DEHYDROGENASE [UBIQUINONE] IRON-SULFUR PROTEIN 7, MITOCHONDRIAL"/>
    <property type="match status" value="1"/>
</dbReference>
<dbReference type="Pfam" id="PF01058">
    <property type="entry name" value="Oxidored_q6"/>
    <property type="match status" value="1"/>
</dbReference>
<dbReference type="SUPFAM" id="SSF56770">
    <property type="entry name" value="HydA/Nqo6-like"/>
    <property type="match status" value="1"/>
</dbReference>
<dbReference type="PROSITE" id="PS01150">
    <property type="entry name" value="COMPLEX1_20K"/>
    <property type="match status" value="1"/>
</dbReference>
<gene>
    <name evidence="1" type="primary">nuoB</name>
    <name type="ordered locus">Bfl492</name>
</gene>
<organism>
    <name type="scientific">Blochmanniella floridana</name>
    <dbReference type="NCBI Taxonomy" id="203907"/>
    <lineage>
        <taxon>Bacteria</taxon>
        <taxon>Pseudomonadati</taxon>
        <taxon>Pseudomonadota</taxon>
        <taxon>Gammaproteobacteria</taxon>
        <taxon>Enterobacterales</taxon>
        <taxon>Enterobacteriaceae</taxon>
        <taxon>ant endosymbionts</taxon>
        <taxon>Candidatus Blochmanniella</taxon>
    </lineage>
</organism>
<keyword id="KW-0004">4Fe-4S</keyword>
<keyword id="KW-0997">Cell inner membrane</keyword>
<keyword id="KW-1003">Cell membrane</keyword>
<keyword id="KW-0408">Iron</keyword>
<keyword id="KW-0411">Iron-sulfur</keyword>
<keyword id="KW-0472">Membrane</keyword>
<keyword id="KW-0479">Metal-binding</keyword>
<keyword id="KW-0520">NAD</keyword>
<keyword id="KW-0874">Quinone</keyword>
<keyword id="KW-1185">Reference proteome</keyword>
<keyword id="KW-1278">Translocase</keyword>
<keyword id="KW-0813">Transport</keyword>
<keyword id="KW-0830">Ubiquinone</keyword>
<feature type="chain" id="PRO_0000376151" description="NADH-quinone oxidoreductase subunit B">
    <location>
        <begin position="1"/>
        <end position="223"/>
    </location>
</feature>
<feature type="region of interest" description="Disordered" evidence="2">
    <location>
        <begin position="1"/>
        <end position="25"/>
    </location>
</feature>
<feature type="binding site" evidence="1">
    <location>
        <position position="68"/>
    </location>
    <ligand>
        <name>[4Fe-4S] cluster</name>
        <dbReference type="ChEBI" id="CHEBI:49883"/>
    </ligand>
</feature>
<feature type="binding site" evidence="1">
    <location>
        <position position="69"/>
    </location>
    <ligand>
        <name>[4Fe-4S] cluster</name>
        <dbReference type="ChEBI" id="CHEBI:49883"/>
    </ligand>
</feature>
<feature type="binding site" evidence="1">
    <location>
        <position position="134"/>
    </location>
    <ligand>
        <name>[4Fe-4S] cluster</name>
        <dbReference type="ChEBI" id="CHEBI:49883"/>
    </ligand>
</feature>
<feature type="binding site" evidence="1">
    <location>
        <position position="163"/>
    </location>
    <ligand>
        <name>[4Fe-4S] cluster</name>
        <dbReference type="ChEBI" id="CHEBI:49883"/>
    </ligand>
</feature>
<name>NUOB_BLOFL</name>
<comment type="function">
    <text evidence="1">NDH-1 shuttles electrons from NADH, via FMN and iron-sulfur (Fe-S) centers, to quinones in the respiratory chain. The immediate electron acceptor for the enzyme in this species is believed to be ubiquinone. Couples the redox reaction to proton translocation (for every two electrons transferred, four hydrogen ions are translocated across the cytoplasmic membrane), and thus conserves the redox energy in a proton gradient.</text>
</comment>
<comment type="catalytic activity">
    <reaction evidence="1">
        <text>a quinone + NADH + 5 H(+)(in) = a quinol + NAD(+) + 4 H(+)(out)</text>
        <dbReference type="Rhea" id="RHEA:57888"/>
        <dbReference type="ChEBI" id="CHEBI:15378"/>
        <dbReference type="ChEBI" id="CHEBI:24646"/>
        <dbReference type="ChEBI" id="CHEBI:57540"/>
        <dbReference type="ChEBI" id="CHEBI:57945"/>
        <dbReference type="ChEBI" id="CHEBI:132124"/>
    </reaction>
</comment>
<comment type="cofactor">
    <cofactor evidence="1">
        <name>[4Fe-4S] cluster</name>
        <dbReference type="ChEBI" id="CHEBI:49883"/>
    </cofactor>
    <text evidence="1">Binds 1 [4Fe-4S] cluster.</text>
</comment>
<comment type="subunit">
    <text evidence="1">NDH-1 is composed of 13 different subunits. Subunits NuoB, CD, E, F, and G constitute the peripheral sector of the complex.</text>
</comment>
<comment type="subcellular location">
    <subcellularLocation>
        <location evidence="1">Cell inner membrane</location>
        <topology evidence="1">Peripheral membrane protein</topology>
        <orientation evidence="1">Cytoplasmic side</orientation>
    </subcellularLocation>
</comment>
<comment type="similarity">
    <text evidence="1">Belongs to the complex I 20 kDa subunit family.</text>
</comment>
<reference key="1">
    <citation type="journal article" date="2003" name="Proc. Natl. Acad. Sci. U.S.A.">
        <title>The genome sequence of Blochmannia floridanus: comparative analysis of reduced genomes.</title>
        <authorList>
            <person name="Gil R."/>
            <person name="Silva F.J."/>
            <person name="Zientz E."/>
            <person name="Delmotte F."/>
            <person name="Gonzalez-Candelas F."/>
            <person name="Latorre A."/>
            <person name="Rausell C."/>
            <person name="Kamerbeek J."/>
            <person name="Gadau J."/>
            <person name="Hoelldobler B."/>
            <person name="van Ham R.C.H.J."/>
            <person name="Gross R."/>
            <person name="Moya A."/>
        </authorList>
    </citation>
    <scope>NUCLEOTIDE SEQUENCE [LARGE SCALE GENOMIC DNA]</scope>
</reference>
<sequence length="223" mass="25562">MKYTLTLARTNQDDDSVYPEQDQKPVADPLDKQIEKNVYFGKLKNLLHKAVNWGRSNSLWPYNFGLSCCYVEMTTAFTAVHDVARFGSEVLRSSPRQSDFMVIAGTPFLKMVPIIQRLYDQMLEPKWVISMGSCANSGGMYDIYSVVQGVDKFLPVDIYIPGCPPRPEAYIQALLLLKKSINKERRPLSWVIDDQGVYKMNMKSERELKRKDRISAVEFSDTD</sequence>
<accession>Q7VRV3</accession>
<protein>
    <recommendedName>
        <fullName evidence="1">NADH-quinone oxidoreductase subunit B</fullName>
        <ecNumber evidence="1">7.1.1.-</ecNumber>
    </recommendedName>
    <alternativeName>
        <fullName evidence="1">NADH dehydrogenase I subunit B</fullName>
    </alternativeName>
    <alternativeName>
        <fullName evidence="1">NDH-1 subunit B</fullName>
    </alternativeName>
</protein>
<evidence type="ECO:0000255" key="1">
    <source>
        <dbReference type="HAMAP-Rule" id="MF_01356"/>
    </source>
</evidence>
<evidence type="ECO:0000256" key="2">
    <source>
        <dbReference type="SAM" id="MobiDB-lite"/>
    </source>
</evidence>
<proteinExistence type="inferred from homology"/>